<feature type="initiator methionine" description="Removed" evidence="3">
    <location>
        <position position="1"/>
    </location>
</feature>
<feature type="chain" id="PRO_0000099909" description="Pyruvate synthase subunit PorB">
    <location>
        <begin position="2"/>
        <end position="324"/>
    </location>
</feature>
<feature type="region of interest" description="Disordered" evidence="2">
    <location>
        <begin position="150"/>
        <end position="172"/>
    </location>
</feature>
<feature type="compositionally biased region" description="Low complexity" evidence="2">
    <location>
        <begin position="155"/>
        <end position="166"/>
    </location>
</feature>
<feature type="binding site" evidence="1">
    <location>
        <position position="26"/>
    </location>
    <ligand>
        <name>[4Fe-4S] cluster</name>
        <dbReference type="ChEBI" id="CHEBI:49883"/>
    </ligand>
</feature>
<feature type="binding site" evidence="1">
    <location>
        <position position="29"/>
    </location>
    <ligand>
        <name>[4Fe-4S] cluster</name>
        <dbReference type="ChEBI" id="CHEBI:49883"/>
    </ligand>
</feature>
<feature type="binding site" evidence="1">
    <location>
        <position position="57"/>
    </location>
    <ligand>
        <name>[4Fe-4S] cluster</name>
        <dbReference type="ChEBI" id="CHEBI:49883"/>
    </ligand>
</feature>
<feature type="binding site" evidence="1">
    <location>
        <position position="228"/>
    </location>
    <ligand>
        <name>[4Fe-4S] cluster</name>
        <dbReference type="ChEBI" id="CHEBI:49883"/>
    </ligand>
</feature>
<proteinExistence type="evidence at protein level"/>
<gene>
    <name type="primary">porB</name>
    <name type="ordered locus">TM_0018</name>
</gene>
<accession>Q56317</accession>
<protein>
    <recommendedName>
        <fullName>Pyruvate synthase subunit PorB</fullName>
        <ecNumber>1.2.7.1</ecNumber>
    </recommendedName>
    <alternativeName>
        <fullName>Pyruvate oxidoreductase beta chain</fullName>
        <shortName>POR</shortName>
    </alternativeName>
    <alternativeName>
        <fullName>Pyruvic-ferredoxin oxidoreductase subunit beta</fullName>
    </alternativeName>
</protein>
<name>PORB_THEMA</name>
<evidence type="ECO:0000250" key="1">
    <source>
        <dbReference type="UniProtKB" id="P94692"/>
    </source>
</evidence>
<evidence type="ECO:0000256" key="2">
    <source>
        <dbReference type="SAM" id="MobiDB-lite"/>
    </source>
</evidence>
<evidence type="ECO:0000269" key="3">
    <source>
    </source>
</evidence>
<comment type="catalytic activity">
    <reaction>
        <text>2 oxidized [2Fe-2S]-[ferredoxin] + pyruvate + CoA = 2 reduced [2Fe-2S]-[ferredoxin] + acetyl-CoA + CO2 + H(+)</text>
        <dbReference type="Rhea" id="RHEA:12765"/>
        <dbReference type="Rhea" id="RHEA-COMP:10000"/>
        <dbReference type="Rhea" id="RHEA-COMP:10001"/>
        <dbReference type="ChEBI" id="CHEBI:15361"/>
        <dbReference type="ChEBI" id="CHEBI:15378"/>
        <dbReference type="ChEBI" id="CHEBI:16526"/>
        <dbReference type="ChEBI" id="CHEBI:33737"/>
        <dbReference type="ChEBI" id="CHEBI:33738"/>
        <dbReference type="ChEBI" id="CHEBI:57287"/>
        <dbReference type="ChEBI" id="CHEBI:57288"/>
        <dbReference type="EC" id="1.2.7.1"/>
    </reaction>
</comment>
<comment type="cofactor">
    <cofactor evidence="1">
        <name>[4Fe-4S] cluster</name>
        <dbReference type="ChEBI" id="CHEBI:49883"/>
    </cofactor>
    <text evidence="1">Binds 1 [4Fe-4S] cluster per subunit.</text>
</comment>
<comment type="subunit">
    <text>Heterotetramer of one alpha, one beta, one delta and one gamma chain.</text>
</comment>
<sequence length="324" mass="36385">MPVNIKQLAQEFDKKEIGITQGHRLCPGCGAPITVKFVMMIARHLGYEPVVGLATGCLEVSTSIYPYTAWSVPYIHNAFENVAATMSGVETAYKALKNKGKIPEDKKYAFIAFGGDGGTYDIGLQSLSGMLERGHKVLYVLYDNEGYMNTGNQRSGSTPPGSDTTTAPVGKKLPGKVQLKKNIVEIVAAHENVYAATASLSEPMDFFAKVEKALNFDGPSFLAVFSPCVRFWRVNDDKTVEISKLAVETKYWPLYEVERGVYRVTRKPRQFKPVEEFLKAQGRFRKLLSRPDAKEIVDELQEYVDRRWERLLTLEEVTKDKPIR</sequence>
<dbReference type="EC" id="1.2.7.1"/>
<dbReference type="EMBL" id="X85171">
    <property type="protein sequence ID" value="CAA59458.1"/>
    <property type="molecule type" value="Genomic_DNA"/>
</dbReference>
<dbReference type="EMBL" id="AE000512">
    <property type="protein sequence ID" value="AAD35112.1"/>
    <property type="molecule type" value="Genomic_DNA"/>
</dbReference>
<dbReference type="PIR" id="B59427">
    <property type="entry name" value="D72427"/>
</dbReference>
<dbReference type="RefSeq" id="NP_227834.1">
    <property type="nucleotide sequence ID" value="NC_000853.1"/>
</dbReference>
<dbReference type="RefSeq" id="WP_004082462.1">
    <property type="nucleotide sequence ID" value="NZ_CP011107.1"/>
</dbReference>
<dbReference type="SMR" id="Q56317"/>
<dbReference type="STRING" id="243274.TM_0018"/>
<dbReference type="PaxDb" id="243274-THEMA_04710"/>
<dbReference type="EnsemblBacteria" id="AAD35112">
    <property type="protein sequence ID" value="AAD35112"/>
    <property type="gene ID" value="TM_0018"/>
</dbReference>
<dbReference type="KEGG" id="tma:TM0018"/>
<dbReference type="KEGG" id="tmi:THEMA_04710"/>
<dbReference type="KEGG" id="tmm:Tmari_0015"/>
<dbReference type="KEGG" id="tmw:THMA_0014"/>
<dbReference type="eggNOG" id="COG1013">
    <property type="taxonomic scope" value="Bacteria"/>
</dbReference>
<dbReference type="InParanoid" id="Q56317"/>
<dbReference type="OrthoDB" id="9794954at2"/>
<dbReference type="BioCyc" id="MetaCyc:MONOMER-424"/>
<dbReference type="BRENDA" id="1.2.7.1">
    <property type="organism ID" value="6331"/>
</dbReference>
<dbReference type="Proteomes" id="UP000008183">
    <property type="component" value="Chromosome"/>
</dbReference>
<dbReference type="GO" id="GO:0051539">
    <property type="term" value="F:4 iron, 4 sulfur cluster binding"/>
    <property type="evidence" value="ECO:0007669"/>
    <property type="project" value="UniProtKB-KW"/>
</dbReference>
<dbReference type="GO" id="GO:0046872">
    <property type="term" value="F:metal ion binding"/>
    <property type="evidence" value="ECO:0007669"/>
    <property type="project" value="UniProtKB-KW"/>
</dbReference>
<dbReference type="GO" id="GO:0019164">
    <property type="term" value="F:pyruvate synthase activity"/>
    <property type="evidence" value="ECO:0007669"/>
    <property type="project" value="UniProtKB-EC"/>
</dbReference>
<dbReference type="GO" id="GO:0030976">
    <property type="term" value="F:thiamine pyrophosphate binding"/>
    <property type="evidence" value="ECO:0007669"/>
    <property type="project" value="InterPro"/>
</dbReference>
<dbReference type="CDD" id="cd03376">
    <property type="entry name" value="TPP_PFOR_porB_like"/>
    <property type="match status" value="1"/>
</dbReference>
<dbReference type="Gene3D" id="3.40.50.970">
    <property type="match status" value="2"/>
</dbReference>
<dbReference type="InterPro" id="IPR051479">
    <property type="entry name" value="PorB-like"/>
</dbReference>
<dbReference type="InterPro" id="IPR029061">
    <property type="entry name" value="THDP-binding"/>
</dbReference>
<dbReference type="InterPro" id="IPR011766">
    <property type="entry name" value="TPP_enzyme_TPP-bd"/>
</dbReference>
<dbReference type="PANTHER" id="PTHR42897">
    <property type="entry name" value="PYRUVATE SYNTHASE SUBUNIT PORB"/>
    <property type="match status" value="1"/>
</dbReference>
<dbReference type="PANTHER" id="PTHR42897:SF2">
    <property type="entry name" value="PYRUVATE SYNTHASE SUBUNIT PORB"/>
    <property type="match status" value="1"/>
</dbReference>
<dbReference type="Pfam" id="PF02775">
    <property type="entry name" value="TPP_enzyme_C"/>
    <property type="match status" value="1"/>
</dbReference>
<dbReference type="SUPFAM" id="SSF52518">
    <property type="entry name" value="Thiamin diphosphate-binding fold (THDP-binding)"/>
    <property type="match status" value="1"/>
</dbReference>
<reference key="1">
    <citation type="journal article" date="1996" name="J. Bacteriol.">
        <title>Molecular and phylogenetic characterization of pyruvate and 2-ketoisovalerate ferredoxin oxidoreductases from Pyrococcus furiosus and pyruvate ferredoxin oxidoreductase from Thermotoga maritima.</title>
        <authorList>
            <person name="Kletzin A."/>
            <person name="Adams M.W.W."/>
        </authorList>
    </citation>
    <scope>NUCLEOTIDE SEQUENCE [GENOMIC DNA]</scope>
    <scope>PROTEIN SEQUENCE OF 2-17 AND 20-44</scope>
    <source>
        <strain>ATCC 43589 / DSM 3109 / JCM 10099 / NBRC 100826 / MSB8</strain>
    </source>
</reference>
<reference key="2">
    <citation type="journal article" date="1999" name="Nature">
        <title>Evidence for lateral gene transfer between Archaea and Bacteria from genome sequence of Thermotoga maritima.</title>
        <authorList>
            <person name="Nelson K.E."/>
            <person name="Clayton R.A."/>
            <person name="Gill S.R."/>
            <person name="Gwinn M.L."/>
            <person name="Dodson R.J."/>
            <person name="Haft D.H."/>
            <person name="Hickey E.K."/>
            <person name="Peterson J.D."/>
            <person name="Nelson W.C."/>
            <person name="Ketchum K.A."/>
            <person name="McDonald L.A."/>
            <person name="Utterback T.R."/>
            <person name="Malek J.A."/>
            <person name="Linher K.D."/>
            <person name="Garrett M.M."/>
            <person name="Stewart A.M."/>
            <person name="Cotton M.D."/>
            <person name="Pratt M.S."/>
            <person name="Phillips C.A."/>
            <person name="Richardson D.L."/>
            <person name="Heidelberg J.F."/>
            <person name="Sutton G.G."/>
            <person name="Fleischmann R.D."/>
            <person name="Eisen J.A."/>
            <person name="White O."/>
            <person name="Salzberg S.L."/>
            <person name="Smith H.O."/>
            <person name="Venter J.C."/>
            <person name="Fraser C.M."/>
        </authorList>
    </citation>
    <scope>NUCLEOTIDE SEQUENCE [LARGE SCALE GENOMIC DNA]</scope>
    <source>
        <strain>ATCC 43589 / DSM 3109 / JCM 10099 / NBRC 100826 / MSB8</strain>
    </source>
</reference>
<keyword id="KW-0004">4Fe-4S</keyword>
<keyword id="KW-0903">Direct protein sequencing</keyword>
<keyword id="KW-0408">Iron</keyword>
<keyword id="KW-0411">Iron-sulfur</keyword>
<keyword id="KW-0479">Metal-binding</keyword>
<keyword id="KW-0560">Oxidoreductase</keyword>
<keyword id="KW-1185">Reference proteome</keyword>
<organism>
    <name type="scientific">Thermotoga maritima (strain ATCC 43589 / DSM 3109 / JCM 10099 / NBRC 100826 / MSB8)</name>
    <dbReference type="NCBI Taxonomy" id="243274"/>
    <lineage>
        <taxon>Bacteria</taxon>
        <taxon>Thermotogati</taxon>
        <taxon>Thermotogota</taxon>
        <taxon>Thermotogae</taxon>
        <taxon>Thermotogales</taxon>
        <taxon>Thermotogaceae</taxon>
        <taxon>Thermotoga</taxon>
    </lineage>
</organism>